<keyword id="KW-0004">4Fe-4S</keyword>
<keyword id="KW-0997">Cell inner membrane</keyword>
<keyword id="KW-1003">Cell membrane</keyword>
<keyword id="KW-0408">Iron</keyword>
<keyword id="KW-0411">Iron-sulfur</keyword>
<keyword id="KW-0472">Membrane</keyword>
<keyword id="KW-0479">Metal-binding</keyword>
<keyword id="KW-0520">NAD</keyword>
<keyword id="KW-0874">Quinone</keyword>
<keyword id="KW-1278">Translocase</keyword>
<keyword id="KW-0813">Transport</keyword>
<keyword id="KW-0830">Ubiquinone</keyword>
<name>NUOB_SULSY</name>
<accession>B2V988</accession>
<organism>
    <name type="scientific">Sulfurihydrogenibium sp. (strain YO3AOP1)</name>
    <dbReference type="NCBI Taxonomy" id="436114"/>
    <lineage>
        <taxon>Bacteria</taxon>
        <taxon>Pseudomonadati</taxon>
        <taxon>Aquificota</taxon>
        <taxon>Aquificia</taxon>
        <taxon>Aquificales</taxon>
        <taxon>Hydrogenothermaceae</taxon>
        <taxon>Sulfurihydrogenibium</taxon>
    </lineage>
</organism>
<proteinExistence type="inferred from homology"/>
<reference key="1">
    <citation type="journal article" date="2009" name="J. Bacteriol.">
        <title>Complete and draft genome sequences of six members of the Aquificales.</title>
        <authorList>
            <person name="Reysenbach A.-L."/>
            <person name="Hamamura N."/>
            <person name="Podar M."/>
            <person name="Griffiths E."/>
            <person name="Ferreira S."/>
            <person name="Hochstein R."/>
            <person name="Heidelberg J."/>
            <person name="Johnson J."/>
            <person name="Mead D."/>
            <person name="Pohorille A."/>
            <person name="Sarmiento M."/>
            <person name="Schweighofer K."/>
            <person name="Seshadri R."/>
            <person name="Voytek M.A."/>
        </authorList>
    </citation>
    <scope>NUCLEOTIDE SEQUENCE [LARGE SCALE GENOMIC DNA]</scope>
    <source>
        <strain>YO3AOP1</strain>
    </source>
</reference>
<feature type="chain" id="PRO_0000376391" description="NADH-quinone oxidoreductase subunit B">
    <location>
        <begin position="1"/>
        <end position="171"/>
    </location>
</feature>
<feature type="binding site" evidence="1">
    <location>
        <position position="34"/>
    </location>
    <ligand>
        <name>[4Fe-4S] cluster</name>
        <dbReference type="ChEBI" id="CHEBI:49883"/>
    </ligand>
</feature>
<feature type="binding site" evidence="1">
    <location>
        <position position="35"/>
    </location>
    <ligand>
        <name>[4Fe-4S] cluster</name>
        <dbReference type="ChEBI" id="CHEBI:49883"/>
    </ligand>
</feature>
<feature type="binding site" evidence="1">
    <location>
        <position position="99"/>
    </location>
    <ligand>
        <name>[4Fe-4S] cluster</name>
        <dbReference type="ChEBI" id="CHEBI:49883"/>
    </ligand>
</feature>
<feature type="binding site" evidence="1">
    <location>
        <position position="128"/>
    </location>
    <ligand>
        <name>[4Fe-4S] cluster</name>
        <dbReference type="ChEBI" id="CHEBI:49883"/>
    </ligand>
</feature>
<dbReference type="EC" id="7.1.1.-" evidence="1"/>
<dbReference type="EMBL" id="CP001080">
    <property type="protein sequence ID" value="ACD66511.1"/>
    <property type="molecule type" value="Genomic_DNA"/>
</dbReference>
<dbReference type="RefSeq" id="WP_012459585.1">
    <property type="nucleotide sequence ID" value="NC_010730.1"/>
</dbReference>
<dbReference type="SMR" id="B2V988"/>
<dbReference type="STRING" id="436114.SYO3AOP1_0883"/>
<dbReference type="KEGG" id="sul:SYO3AOP1_0883"/>
<dbReference type="eggNOG" id="COG0377">
    <property type="taxonomic scope" value="Bacteria"/>
</dbReference>
<dbReference type="HOGENOM" id="CLU_055737_7_3_0"/>
<dbReference type="GO" id="GO:0005886">
    <property type="term" value="C:plasma membrane"/>
    <property type="evidence" value="ECO:0007669"/>
    <property type="project" value="UniProtKB-SubCell"/>
</dbReference>
<dbReference type="GO" id="GO:0045271">
    <property type="term" value="C:respiratory chain complex I"/>
    <property type="evidence" value="ECO:0007669"/>
    <property type="project" value="TreeGrafter"/>
</dbReference>
<dbReference type="GO" id="GO:0051539">
    <property type="term" value="F:4 iron, 4 sulfur cluster binding"/>
    <property type="evidence" value="ECO:0007669"/>
    <property type="project" value="UniProtKB-KW"/>
</dbReference>
<dbReference type="GO" id="GO:0005506">
    <property type="term" value="F:iron ion binding"/>
    <property type="evidence" value="ECO:0007669"/>
    <property type="project" value="UniProtKB-UniRule"/>
</dbReference>
<dbReference type="GO" id="GO:0008137">
    <property type="term" value="F:NADH dehydrogenase (ubiquinone) activity"/>
    <property type="evidence" value="ECO:0007669"/>
    <property type="project" value="InterPro"/>
</dbReference>
<dbReference type="GO" id="GO:0050136">
    <property type="term" value="F:NADH:ubiquinone reductase (non-electrogenic) activity"/>
    <property type="evidence" value="ECO:0007669"/>
    <property type="project" value="UniProtKB-UniRule"/>
</dbReference>
<dbReference type="GO" id="GO:0048038">
    <property type="term" value="F:quinone binding"/>
    <property type="evidence" value="ECO:0007669"/>
    <property type="project" value="UniProtKB-KW"/>
</dbReference>
<dbReference type="GO" id="GO:0009060">
    <property type="term" value="P:aerobic respiration"/>
    <property type="evidence" value="ECO:0007669"/>
    <property type="project" value="TreeGrafter"/>
</dbReference>
<dbReference type="GO" id="GO:0015990">
    <property type="term" value="P:electron transport coupled proton transport"/>
    <property type="evidence" value="ECO:0007669"/>
    <property type="project" value="TreeGrafter"/>
</dbReference>
<dbReference type="FunFam" id="3.40.50.12280:FF:000002">
    <property type="entry name" value="NADH-quinone oxidoreductase subunit B"/>
    <property type="match status" value="1"/>
</dbReference>
<dbReference type="Gene3D" id="3.40.50.12280">
    <property type="match status" value="1"/>
</dbReference>
<dbReference type="HAMAP" id="MF_01356">
    <property type="entry name" value="NDH1_NuoB"/>
    <property type="match status" value="1"/>
</dbReference>
<dbReference type="InterPro" id="IPR006137">
    <property type="entry name" value="NADH_UbQ_OxRdtase-like_20kDa"/>
</dbReference>
<dbReference type="InterPro" id="IPR006138">
    <property type="entry name" value="NADH_UQ_OxRdtase_20Kd_su"/>
</dbReference>
<dbReference type="NCBIfam" id="TIGR01957">
    <property type="entry name" value="nuoB_fam"/>
    <property type="match status" value="1"/>
</dbReference>
<dbReference type="NCBIfam" id="NF005012">
    <property type="entry name" value="PRK06411.1"/>
    <property type="match status" value="1"/>
</dbReference>
<dbReference type="PANTHER" id="PTHR11995">
    <property type="entry name" value="NADH DEHYDROGENASE"/>
    <property type="match status" value="1"/>
</dbReference>
<dbReference type="PANTHER" id="PTHR11995:SF14">
    <property type="entry name" value="NADH DEHYDROGENASE [UBIQUINONE] IRON-SULFUR PROTEIN 7, MITOCHONDRIAL"/>
    <property type="match status" value="1"/>
</dbReference>
<dbReference type="Pfam" id="PF01058">
    <property type="entry name" value="Oxidored_q6"/>
    <property type="match status" value="1"/>
</dbReference>
<dbReference type="SUPFAM" id="SSF56770">
    <property type="entry name" value="HydA/Nqo6-like"/>
    <property type="match status" value="1"/>
</dbReference>
<dbReference type="PROSITE" id="PS01150">
    <property type="entry name" value="COMPLEX1_20K"/>
    <property type="match status" value="1"/>
</dbReference>
<gene>
    <name evidence="1" type="primary">nuoB</name>
    <name type="ordered locus">SYO3AOP1_0883</name>
</gene>
<protein>
    <recommendedName>
        <fullName evidence="1">NADH-quinone oxidoreductase subunit B</fullName>
        <ecNumber evidence="1">7.1.1.-</ecNumber>
    </recommendedName>
    <alternativeName>
        <fullName evidence="1">NADH dehydrogenase I subunit B</fullName>
    </alternativeName>
    <alternativeName>
        <fullName evidence="1">NDH-1 subunit B</fullName>
    </alternativeName>
</protein>
<comment type="function">
    <text evidence="1">NDH-1 shuttles electrons from NADH, via FMN and iron-sulfur (Fe-S) centers, to quinones in the respiratory chain. The immediate electron acceptor for the enzyme in this species is believed to be ubiquinone. Couples the redox reaction to proton translocation (for every two electrons transferred, four hydrogen ions are translocated across the cytoplasmic membrane), and thus conserves the redox energy in a proton gradient.</text>
</comment>
<comment type="catalytic activity">
    <reaction evidence="1">
        <text>a quinone + NADH + 5 H(+)(in) = a quinol + NAD(+) + 4 H(+)(out)</text>
        <dbReference type="Rhea" id="RHEA:57888"/>
        <dbReference type="ChEBI" id="CHEBI:15378"/>
        <dbReference type="ChEBI" id="CHEBI:24646"/>
        <dbReference type="ChEBI" id="CHEBI:57540"/>
        <dbReference type="ChEBI" id="CHEBI:57945"/>
        <dbReference type="ChEBI" id="CHEBI:132124"/>
    </reaction>
</comment>
<comment type="cofactor">
    <cofactor evidence="1">
        <name>[4Fe-4S] cluster</name>
        <dbReference type="ChEBI" id="CHEBI:49883"/>
    </cofactor>
    <text evidence="1">Binds 1 [4Fe-4S] cluster.</text>
</comment>
<comment type="subunit">
    <text evidence="1">NDH-1 is composed of 14 different subunits. Subunits NuoB, C, D, E, F, and G constitute the peripheral sector of the complex.</text>
</comment>
<comment type="subcellular location">
    <subcellularLocation>
        <location evidence="1">Cell inner membrane</location>
        <topology evidence="1">Peripheral membrane protein</topology>
        <orientation evidence="1">Cytoplasmic side</orientation>
    </subcellularLocation>
</comment>
<comment type="similarity">
    <text evidence="1">Belongs to the complex I 20 kDa subunit family.</text>
</comment>
<sequence>MAMTSSGIILTTVEEVLSWGRRNSLWPVSVGLACCAIEMMHTAASRFDTDRLGIIFRGSPRQSDVLIVAGTVVNKVAPMLRLIYEQMPDPKWVISMGGCASAGGPFPTYPTLQGVDRIIPVDVYIPGCPPTPQALLWGILELQKKIKAKKEGKELIEIPIKVPQESKPISK</sequence>
<evidence type="ECO:0000255" key="1">
    <source>
        <dbReference type="HAMAP-Rule" id="MF_01356"/>
    </source>
</evidence>